<dbReference type="EC" id="4.2.1.24" evidence="7"/>
<dbReference type="EMBL" id="M24488">
    <property type="protein sequence ID" value="AAA62629.1"/>
    <property type="molecule type" value="Genomic_DNA"/>
</dbReference>
<dbReference type="EMBL" id="X17417">
    <property type="protein sequence ID" value="CAA35467.1"/>
    <property type="molecule type" value="Genomic_DNA"/>
</dbReference>
<dbReference type="EMBL" id="L44595">
    <property type="protein sequence ID" value="AAB52499.1"/>
    <property type="molecule type" value="Genomic_DNA"/>
</dbReference>
<dbReference type="EMBL" id="D85613">
    <property type="protein sequence ID" value="BAA12842.1"/>
    <property type="status" value="ALT_INIT"/>
    <property type="molecule type" value="Genomic_DNA"/>
</dbReference>
<dbReference type="EMBL" id="U73857">
    <property type="protein sequence ID" value="AAB18092.1"/>
    <property type="status" value="ALT_INIT"/>
    <property type="molecule type" value="Genomic_DNA"/>
</dbReference>
<dbReference type="EMBL" id="U00096">
    <property type="protein sequence ID" value="AAC73472.2"/>
    <property type="molecule type" value="Genomic_DNA"/>
</dbReference>
<dbReference type="EMBL" id="AP009048">
    <property type="protein sequence ID" value="BAE76150.1"/>
    <property type="molecule type" value="Genomic_DNA"/>
</dbReference>
<dbReference type="PIR" id="A64765">
    <property type="entry name" value="SYECPF"/>
</dbReference>
<dbReference type="RefSeq" id="NP_414903.4">
    <property type="nucleotide sequence ID" value="NC_000913.3"/>
</dbReference>
<dbReference type="RefSeq" id="WP_001295337.1">
    <property type="nucleotide sequence ID" value="NZ_STEB01000036.1"/>
</dbReference>
<dbReference type="PDB" id="1B4E">
    <property type="method" value="X-ray"/>
    <property type="resolution" value="2.00 A"/>
    <property type="chains" value="A=2-324"/>
</dbReference>
<dbReference type="PDB" id="1I8J">
    <property type="method" value="X-ray"/>
    <property type="resolution" value="1.90 A"/>
    <property type="chains" value="A/B=2-324"/>
</dbReference>
<dbReference type="PDB" id="1L6S">
    <property type="method" value="X-ray"/>
    <property type="resolution" value="1.70 A"/>
    <property type="chains" value="A/B=2-324"/>
</dbReference>
<dbReference type="PDB" id="1L6Y">
    <property type="method" value="X-ray"/>
    <property type="resolution" value="1.90 A"/>
    <property type="chains" value="A/B=2-324"/>
</dbReference>
<dbReference type="PDB" id="5MHB">
    <property type="method" value="X-ray"/>
    <property type="resolution" value="2.10 A"/>
    <property type="chains" value="A=1-324"/>
</dbReference>
<dbReference type="PDBsum" id="1B4E"/>
<dbReference type="PDBsum" id="1I8J"/>
<dbReference type="PDBsum" id="1L6S"/>
<dbReference type="PDBsum" id="1L6Y"/>
<dbReference type="PDBsum" id="5MHB"/>
<dbReference type="SMR" id="P0ACB2"/>
<dbReference type="BioGRID" id="4261502">
    <property type="interactions" value="32"/>
</dbReference>
<dbReference type="DIP" id="DIP-36209N"/>
<dbReference type="FunCoup" id="P0ACB2">
    <property type="interactions" value="846"/>
</dbReference>
<dbReference type="IntAct" id="P0ACB2">
    <property type="interactions" value="8"/>
</dbReference>
<dbReference type="MINT" id="P0ACB2"/>
<dbReference type="STRING" id="511145.b0369"/>
<dbReference type="BindingDB" id="P0ACB2"/>
<dbReference type="ChEMBL" id="CHEMBL3286083"/>
<dbReference type="DrugBank" id="DB04560">
    <property type="generic name" value="4,7-Dioxosebacic Acid"/>
</dbReference>
<dbReference type="DrugBank" id="DB02260">
    <property type="generic name" value="4-Oxosebacic Acid"/>
</dbReference>
<dbReference type="DrugBank" id="DB04530">
    <property type="generic name" value="S,S-(2-Hydroxyethyl)Thiocysteine"/>
</dbReference>
<dbReference type="jPOST" id="P0ACB2"/>
<dbReference type="PaxDb" id="511145-b0369"/>
<dbReference type="EnsemblBacteria" id="AAC73472">
    <property type="protein sequence ID" value="AAC73472"/>
    <property type="gene ID" value="b0369"/>
</dbReference>
<dbReference type="GeneID" id="93777089"/>
<dbReference type="GeneID" id="945017"/>
<dbReference type="KEGG" id="ecj:JW0361"/>
<dbReference type="KEGG" id="eco:b0369"/>
<dbReference type="PATRIC" id="fig|1411691.4.peg.1910"/>
<dbReference type="EchoBASE" id="EB0423"/>
<dbReference type="eggNOG" id="COG0113">
    <property type="taxonomic scope" value="Bacteria"/>
</dbReference>
<dbReference type="HOGENOM" id="CLU_035731_0_0_6"/>
<dbReference type="InParanoid" id="P0ACB2"/>
<dbReference type="OMA" id="YMDIIWR"/>
<dbReference type="OrthoDB" id="9805001at2"/>
<dbReference type="PhylomeDB" id="P0ACB2"/>
<dbReference type="BioCyc" id="EcoCyc:PORPHOBILSYNTH-MONOMER"/>
<dbReference type="BioCyc" id="MetaCyc:PORPHOBILSYNTH-MONOMER"/>
<dbReference type="BRENDA" id="4.2.1.24">
    <property type="organism ID" value="2026"/>
</dbReference>
<dbReference type="SABIO-RK" id="P0ACB2"/>
<dbReference type="UniPathway" id="UPA00251">
    <property type="reaction ID" value="UER00318"/>
</dbReference>
<dbReference type="EvolutionaryTrace" id="P0ACB2"/>
<dbReference type="PRO" id="PR:P0ACB2"/>
<dbReference type="Proteomes" id="UP000000625">
    <property type="component" value="Chromosome"/>
</dbReference>
<dbReference type="GO" id="GO:0005829">
    <property type="term" value="C:cytosol"/>
    <property type="evidence" value="ECO:0000314"/>
    <property type="project" value="EcoCyc"/>
</dbReference>
<dbReference type="GO" id="GO:0000287">
    <property type="term" value="F:magnesium ion binding"/>
    <property type="evidence" value="ECO:0000314"/>
    <property type="project" value="EcoCyc"/>
</dbReference>
<dbReference type="GO" id="GO:0004655">
    <property type="term" value="F:porphobilinogen synthase activity"/>
    <property type="evidence" value="ECO:0000314"/>
    <property type="project" value="EcoCyc"/>
</dbReference>
<dbReference type="GO" id="GO:0008270">
    <property type="term" value="F:zinc ion binding"/>
    <property type="evidence" value="ECO:0000314"/>
    <property type="project" value="EcoCyc"/>
</dbReference>
<dbReference type="GO" id="GO:0006783">
    <property type="term" value="P:heme biosynthetic process"/>
    <property type="evidence" value="ECO:0000315"/>
    <property type="project" value="EcoliWiki"/>
</dbReference>
<dbReference type="GO" id="GO:0006782">
    <property type="term" value="P:protoporphyrinogen IX biosynthetic process"/>
    <property type="evidence" value="ECO:0007669"/>
    <property type="project" value="UniProtKB-UniPathway"/>
</dbReference>
<dbReference type="CDD" id="cd00384">
    <property type="entry name" value="ALAD_PBGS"/>
    <property type="match status" value="1"/>
</dbReference>
<dbReference type="FunFam" id="3.20.20.70:FF:000019">
    <property type="entry name" value="Delta-aminolevulinic acid dehydratase"/>
    <property type="match status" value="1"/>
</dbReference>
<dbReference type="Gene3D" id="3.20.20.70">
    <property type="entry name" value="Aldolase class I"/>
    <property type="match status" value="1"/>
</dbReference>
<dbReference type="InterPro" id="IPR001731">
    <property type="entry name" value="ALAD"/>
</dbReference>
<dbReference type="InterPro" id="IPR030656">
    <property type="entry name" value="ALAD_AS"/>
</dbReference>
<dbReference type="InterPro" id="IPR013785">
    <property type="entry name" value="Aldolase_TIM"/>
</dbReference>
<dbReference type="NCBIfam" id="NF006762">
    <property type="entry name" value="PRK09283.1"/>
    <property type="match status" value="1"/>
</dbReference>
<dbReference type="NCBIfam" id="NF009923">
    <property type="entry name" value="PRK13384.1"/>
    <property type="match status" value="1"/>
</dbReference>
<dbReference type="PANTHER" id="PTHR11458">
    <property type="entry name" value="DELTA-AMINOLEVULINIC ACID DEHYDRATASE"/>
    <property type="match status" value="1"/>
</dbReference>
<dbReference type="PANTHER" id="PTHR11458:SF1">
    <property type="entry name" value="DELTA-AMINOLEVULINIC ACID DEHYDRATASE"/>
    <property type="match status" value="1"/>
</dbReference>
<dbReference type="Pfam" id="PF00490">
    <property type="entry name" value="ALAD"/>
    <property type="match status" value="1"/>
</dbReference>
<dbReference type="PIRSF" id="PIRSF001415">
    <property type="entry name" value="Porphbilin_synth"/>
    <property type="match status" value="1"/>
</dbReference>
<dbReference type="PRINTS" id="PR00144">
    <property type="entry name" value="DALDHYDRTASE"/>
</dbReference>
<dbReference type="SMART" id="SM01004">
    <property type="entry name" value="ALAD"/>
    <property type="match status" value="1"/>
</dbReference>
<dbReference type="SUPFAM" id="SSF51569">
    <property type="entry name" value="Aldolase"/>
    <property type="match status" value="1"/>
</dbReference>
<dbReference type="PROSITE" id="PS00169">
    <property type="entry name" value="D_ALA_DEHYDRATASE"/>
    <property type="match status" value="1"/>
</dbReference>
<protein>
    <recommendedName>
        <fullName>Delta-aminolevulinic acid dehydratase</fullName>
        <shortName>ALAD</shortName>
        <shortName>ALADH</shortName>
        <ecNumber evidence="7">4.2.1.24</ecNumber>
    </recommendedName>
    <alternativeName>
        <fullName>Porphobilinogen synthase</fullName>
    </alternativeName>
</protein>
<accession>P0ACB2</accession>
<accession>P15002</accession>
<accession>P78247</accession>
<accession>Q2MC56</accession>
<proteinExistence type="evidence at protein level"/>
<reference key="1">
    <citation type="journal article" date="1989" name="Gene">
        <title>The structure of the Escherichia coli hemB gene.</title>
        <authorList>
            <person name="Li J.-M."/>
            <person name="Russell C.S."/>
            <person name="Cosloy S.D."/>
        </authorList>
    </citation>
    <scope>NUCLEOTIDE SEQUENCE [GENOMIC DNA]</scope>
    <source>
        <strain>K12</strain>
    </source>
</reference>
<reference key="2">
    <citation type="journal article" date="1988" name="Mol. Gen. Genet.">
        <title>Nucleotide sequence of the hemB gene of Escherichia coli K12.</title>
        <authorList>
            <person name="Echelard Y."/>
            <person name="Dymetryszyn J."/>
            <person name="Drolet M."/>
            <person name="Sasarman A."/>
        </authorList>
    </citation>
    <scope>NUCLEOTIDE SEQUENCE [GENOMIC DNA]</scope>
    <source>
        <strain>K12</strain>
    </source>
</reference>
<reference key="3">
    <citation type="submission" date="1995-08" db="EMBL/GenBank/DDBJ databases">
        <authorList>
            <person name="Sigurdsson E."/>
            <person name="Backman V.M."/>
            <person name="Eggertsson G."/>
        </authorList>
    </citation>
    <scope>NUCLEOTIDE SEQUENCE [GENOMIC DNA]</scope>
    <source>
        <strain>K12 / W3110 / ATCC 27325 / DSM 5911</strain>
    </source>
</reference>
<reference key="4">
    <citation type="submission" date="1995-11" db="EMBL/GenBank/DDBJ databases">
        <authorList>
            <person name="Nashimoto H."/>
            <person name="Saito N."/>
        </authorList>
    </citation>
    <scope>NUCLEOTIDE SEQUENCE [GENOMIC DNA]</scope>
    <source>
        <strain>K12</strain>
    </source>
</reference>
<reference key="5">
    <citation type="submission" date="1997-01" db="EMBL/GenBank/DDBJ databases">
        <title>Sequence of minutes 4-25 of Escherichia coli.</title>
        <authorList>
            <person name="Chung E."/>
            <person name="Allen E."/>
            <person name="Araujo R."/>
            <person name="Aparicio A.M."/>
            <person name="Davis K."/>
            <person name="Duncan M."/>
            <person name="Federspiel N."/>
            <person name="Hyman R."/>
            <person name="Kalman S."/>
            <person name="Komp C."/>
            <person name="Kurdi O."/>
            <person name="Lew H."/>
            <person name="Lin D."/>
            <person name="Namath A."/>
            <person name="Oefner P."/>
            <person name="Roberts D."/>
            <person name="Schramm S."/>
            <person name="Davis R.W."/>
        </authorList>
    </citation>
    <scope>NUCLEOTIDE SEQUENCE [LARGE SCALE GENOMIC DNA]</scope>
    <source>
        <strain>K12 / MG1655 / ATCC 47076</strain>
    </source>
</reference>
<reference key="6">
    <citation type="journal article" date="1997" name="Science">
        <title>The complete genome sequence of Escherichia coli K-12.</title>
        <authorList>
            <person name="Blattner F.R."/>
            <person name="Plunkett G. III"/>
            <person name="Bloch C.A."/>
            <person name="Perna N.T."/>
            <person name="Burland V."/>
            <person name="Riley M."/>
            <person name="Collado-Vides J."/>
            <person name="Glasner J.D."/>
            <person name="Rode C.K."/>
            <person name="Mayhew G.F."/>
            <person name="Gregor J."/>
            <person name="Davis N.W."/>
            <person name="Kirkpatrick H.A."/>
            <person name="Goeden M.A."/>
            <person name="Rose D.J."/>
            <person name="Mau B."/>
            <person name="Shao Y."/>
        </authorList>
    </citation>
    <scope>NUCLEOTIDE SEQUENCE [LARGE SCALE GENOMIC DNA]</scope>
    <source>
        <strain>K12 / MG1655 / ATCC 47076</strain>
    </source>
</reference>
<reference key="7">
    <citation type="journal article" date="2006" name="Mol. Syst. Biol.">
        <title>Highly accurate genome sequences of Escherichia coli K-12 strains MG1655 and W3110.</title>
        <authorList>
            <person name="Hayashi K."/>
            <person name="Morooka N."/>
            <person name="Yamamoto Y."/>
            <person name="Fujita K."/>
            <person name="Isono K."/>
            <person name="Choi S."/>
            <person name="Ohtsubo E."/>
            <person name="Baba T."/>
            <person name="Wanner B.L."/>
            <person name="Mori H."/>
            <person name="Horiuchi T."/>
        </authorList>
    </citation>
    <scope>NUCLEOTIDE SEQUENCE [LARGE SCALE GENOMIC DNA]</scope>
    <source>
        <strain>K12 / W3110 / ATCC 27325 / DSM 5911</strain>
    </source>
</reference>
<reference key="8">
    <citation type="journal article" date="1993" name="Biochem. J.">
        <title>Purification and characterization of 5-aminolaevulinic acid dehydratase from Escherichia coli and a study of the reactive thiols at the metal-binding domain.</title>
        <authorList>
            <person name="Spencer P."/>
            <person name="Jordan P.M."/>
        </authorList>
    </citation>
    <scope>PROTEIN SEQUENCE OF 2-6; 96-135 AND 238-254</scope>
    <scope>COFACTOR</scope>
    <scope>BIOPHYSICOCHEMICAL PROPERTIES</scope>
    <scope>SUBUNIT</scope>
</reference>
<reference key="9">
    <citation type="journal article" date="1995" name="J. Biol. Chem.">
        <title>The phylogenetically conserved histidines of Escherichia coli porphobilinogen synthase are not required for catalysis.</title>
        <authorList>
            <person name="Mitchell L.W."/>
            <person name="Volin M."/>
            <person name="Jaffe E.K."/>
        </authorList>
    </citation>
    <scope>COFACTOR</scope>
    <scope>ACTIVITY REGULATION</scope>
    <scope>MUTAGENESIS OF HIS-127 AND HIS-129</scope>
</reference>
<reference key="10">
    <citation type="journal article" date="1999" name="Biochemistry">
        <title>X-ray structure of 5-aminolevulinic acid dehydratase from Escherichia coli complexed with the inhibitor levulinic acid at 2.0-A resolution.</title>
        <authorList>
            <person name="Erskine P.T."/>
            <person name="Norton E."/>
            <person name="Cooper J.B."/>
            <person name="Lambert R."/>
            <person name="Coker A."/>
            <person name="Lewis G."/>
            <person name="Spencer P."/>
            <person name="Sarwar M."/>
            <person name="Wood S.P."/>
            <person name="Warren M.J."/>
            <person name="Shoolingin-Jordan P.M."/>
        </authorList>
    </citation>
    <scope>X-RAY CRYSTALLOGRAPHY (2.0 ANGSTROMS) IN COMPLEX WITH LEVULINIC ACID AND ZINC IONS</scope>
    <scope>SUBUNIT</scope>
    <scope>COFACTOR</scope>
</reference>
<reference key="11">
    <citation type="journal article" date="2001" name="Biochemistry">
        <title>Mechanistic basis for suicide inactivation of porphobilinogen synthase by 4,7-dioxosebacic acid, an inhibitor that shows dramatic species selectivity.</title>
        <authorList>
            <person name="Kervinen J."/>
            <person name="Jaffe E.K."/>
            <person name="Stauffer F."/>
            <person name="Neier R."/>
            <person name="Wlodawer A."/>
            <person name="Zdanov A."/>
        </authorList>
    </citation>
    <scope>X-RAY CRYSTALLOGRAPHY (1.9 ANGSTROMS) IN COMPLEX WITH 4,7-DIOXOSEBACIC ACID; ZINC AND MAGNESIUM</scope>
    <scope>ACTIVE SITE</scope>
    <scope>SUBUNIT</scope>
    <scope>COFACTOR</scope>
</reference>
<reference key="12">
    <citation type="journal article" date="2002" name="J. Biol. Chem.">
        <title>Species-specific inhibition of porphobilinogen synthase by 4-oxosebacic acid.</title>
        <authorList>
            <person name="Jaffe E.K."/>
            <person name="Kervinen J."/>
            <person name="Martins J."/>
            <person name="Stauffer F."/>
            <person name="Neier R."/>
            <person name="Wlodawer A."/>
            <person name="Zdanov A."/>
        </authorList>
    </citation>
    <scope>X-RAY CRYSTALLOGRAPHY (1.7 ANGSTROMS) IN COMPLEX WITH 4-OXOSEBACIC ACID; ZINC AND MAGNESIUM</scope>
    <scope>ACTIVE SITE</scope>
    <scope>SUBUNIT</scope>
    <scope>COFACTOR</scope>
</reference>
<gene>
    <name type="primary">hemB</name>
    <name type="synonym">ncf</name>
    <name type="ordered locus">b0369</name>
    <name type="ordered locus">JW0361</name>
</gene>
<organism>
    <name type="scientific">Escherichia coli (strain K12)</name>
    <dbReference type="NCBI Taxonomy" id="83333"/>
    <lineage>
        <taxon>Bacteria</taxon>
        <taxon>Pseudomonadati</taxon>
        <taxon>Pseudomonadota</taxon>
        <taxon>Gammaproteobacteria</taxon>
        <taxon>Enterobacterales</taxon>
        <taxon>Enterobacteriaceae</taxon>
        <taxon>Escherichia</taxon>
    </lineage>
</organism>
<sequence length="324" mass="35625">MTDLIQRPRRLRKSPALRAMFEETTLSLNDLVLPIFVEEEIDDYKAVEAMPGVMRIPEKHLAREIERIANAGIRSVMTFGISHHTDETGSDAWREDGLVARMSRICKQTVPEMIVMSDTCFCEYTSHGHCGVLCEHGVDNDATLENLGKQAVVAAAAGADFIAPSAAMDGQVQAIRQALDAAGFKDTAIMSYSTKFASSFYGPFREAAGSALKGDRKSYQMNPMNRREAIRESLLDEAQGADCLMVKPAGAYLDIVRELRERTELPIGAYQVSGEYAMIKFAALAGAIDEEKVVLESLGSIKRAGADLIFSYFALDLAEKKILR</sequence>
<evidence type="ECO:0000269" key="1">
    <source>
    </source>
</evidence>
<evidence type="ECO:0000269" key="2">
    <source>
    </source>
</evidence>
<evidence type="ECO:0000269" key="3">
    <source>
    </source>
</evidence>
<evidence type="ECO:0000269" key="4">
    <source>
    </source>
</evidence>
<evidence type="ECO:0000269" key="5">
    <source>
    </source>
</evidence>
<evidence type="ECO:0000305" key="6"/>
<evidence type="ECO:0000305" key="7">
    <source>
    </source>
</evidence>
<evidence type="ECO:0007829" key="8">
    <source>
        <dbReference type="PDB" id="1B4E"/>
    </source>
</evidence>
<evidence type="ECO:0007829" key="9">
    <source>
        <dbReference type="PDB" id="1L6S"/>
    </source>
</evidence>
<evidence type="ECO:0007829" key="10">
    <source>
        <dbReference type="PDB" id="1L6Y"/>
    </source>
</evidence>
<name>HEM2_ECOLI</name>
<keyword id="KW-0002">3D-structure</keyword>
<keyword id="KW-0021">Allosteric enzyme</keyword>
<keyword id="KW-0903">Direct protein sequencing</keyword>
<keyword id="KW-0350">Heme biosynthesis</keyword>
<keyword id="KW-0456">Lyase</keyword>
<keyword id="KW-0460">Magnesium</keyword>
<keyword id="KW-0479">Metal-binding</keyword>
<keyword id="KW-0627">Porphyrin biosynthesis</keyword>
<keyword id="KW-1185">Reference proteome</keyword>
<keyword id="KW-0862">Zinc</keyword>
<feature type="initiator methionine" description="Removed" evidence="5">
    <location>
        <position position="1"/>
    </location>
</feature>
<feature type="chain" id="PRO_0000140501" description="Delta-aminolevulinic acid dehydratase">
    <location>
        <begin position="2"/>
        <end position="324"/>
    </location>
</feature>
<feature type="active site" description="Schiff-base intermediate with substrate">
    <location>
        <position position="195"/>
    </location>
</feature>
<feature type="active site" description="Schiff-base intermediate with substrate">
    <location>
        <position position="247"/>
    </location>
</feature>
<feature type="binding site" evidence="2 3">
    <location>
        <position position="120"/>
    </location>
    <ligand>
        <name>Zn(2+)</name>
        <dbReference type="ChEBI" id="CHEBI:29105"/>
        <note>catalytic</note>
    </ligand>
</feature>
<feature type="binding site" evidence="2 3">
    <location>
        <position position="122"/>
    </location>
    <ligand>
        <name>Zn(2+)</name>
        <dbReference type="ChEBI" id="CHEBI:29105"/>
        <note>catalytic</note>
    </ligand>
</feature>
<feature type="binding site" evidence="2 3">
    <location>
        <position position="130"/>
    </location>
    <ligand>
        <name>Zn(2+)</name>
        <dbReference type="ChEBI" id="CHEBI:29105"/>
        <note>catalytic</note>
    </ligand>
</feature>
<feature type="binding site">
    <location>
        <position position="205"/>
    </location>
    <ligand>
        <name>5-aminolevulinate</name>
        <dbReference type="ChEBI" id="CHEBI:356416"/>
        <label>1</label>
    </ligand>
</feature>
<feature type="binding site">
    <location>
        <position position="216"/>
    </location>
    <ligand>
        <name>5-aminolevulinate</name>
        <dbReference type="ChEBI" id="CHEBI:356416"/>
        <label>1</label>
    </ligand>
</feature>
<feature type="binding site" evidence="2 3">
    <location>
        <position position="232"/>
    </location>
    <ligand>
        <name>Mg(2+)</name>
        <dbReference type="ChEBI" id="CHEBI:18420"/>
    </ligand>
</feature>
<feature type="binding site">
    <location>
        <position position="273"/>
    </location>
    <ligand>
        <name>5-aminolevulinate</name>
        <dbReference type="ChEBI" id="CHEBI:356416"/>
        <label>2</label>
    </ligand>
</feature>
<feature type="binding site">
    <location>
        <position position="312"/>
    </location>
    <ligand>
        <name>5-aminolevulinate</name>
        <dbReference type="ChEBI" id="CHEBI:356416"/>
        <label>2</label>
    </ligand>
</feature>
<feature type="mutagenesis site" description="No significant effect on activity; when associated with A-129." evidence="4">
    <original>H</original>
    <variation>A</variation>
    <location>
        <position position="127"/>
    </location>
</feature>
<feature type="mutagenesis site" description="No significant effect on activity; when associated with A-127." evidence="4">
    <original>H</original>
    <variation>A</variation>
    <location>
        <position position="129"/>
    </location>
</feature>
<feature type="sequence conflict" description="In Ref. 1; AAA62629." evidence="6" ref="1">
    <original>RA</original>
    <variation>PR</variation>
    <location>
        <begin position="18"/>
        <end position="19"/>
    </location>
</feature>
<feature type="sequence conflict" description="In Ref. 2; CAA35467." evidence="6" ref="2">
    <original>AMFEETTLSLNDLVLPIFVEEEID</original>
    <variation>VCLKRQHLSLTTWCCRSLLKKKLT</variation>
    <location>
        <begin position="19"/>
        <end position="42"/>
    </location>
</feature>
<feature type="sequence conflict" description="In Ref. 1; AAA62629." evidence="6" ref="1">
    <original>SD</original>
    <variation>ER</variation>
    <location>
        <begin position="90"/>
        <end position="91"/>
    </location>
</feature>
<feature type="sequence conflict" description="In Ref. 1; AAA62629." evidence="6" ref="1">
    <original>R</original>
    <variation>P</variation>
    <location>
        <position position="104"/>
    </location>
</feature>
<feature type="sequence conflict" description="In Ref. 2; CAA35467." evidence="6" ref="2">
    <original>R</original>
    <variation>P</variation>
    <location>
        <position position="226"/>
    </location>
</feature>
<feature type="sequence conflict" description="In Ref. 1; AAA62629." evidence="6" ref="1">
    <original>R</original>
    <variation>A</variation>
    <location>
        <position position="227"/>
    </location>
</feature>
<feature type="sequence conflict" description="In Ref. 1; AAA62629." evidence="6" ref="1">
    <original>A</original>
    <variation>G</variation>
    <location>
        <position position="229"/>
    </location>
</feature>
<feature type="sequence conflict" description="In Ref. 1; AAA62629." evidence="6" ref="1">
    <original>R</original>
    <variation>A</variation>
    <location>
        <position position="231"/>
    </location>
</feature>
<feature type="sequence conflict" description="In Ref. 1; AAA62629." evidence="6" ref="1">
    <original>S</original>
    <variation>Y</variation>
    <location>
        <position position="233"/>
    </location>
</feature>
<feature type="sequence conflict" description="In Ref. 1; AAA62629." evidence="6" ref="1">
    <original>A</original>
    <variation>P</variation>
    <location>
        <position position="241"/>
    </location>
</feature>
<feature type="sequence conflict" description="In Ref. 1; AAA62629." evidence="6" ref="1">
    <original>D</original>
    <variation>N</variation>
    <location>
        <position position="254"/>
    </location>
</feature>
<feature type="helix" evidence="9">
    <location>
        <begin position="8"/>
        <end position="12"/>
    </location>
</feature>
<feature type="helix" evidence="9">
    <location>
        <begin position="15"/>
        <end position="21"/>
    </location>
</feature>
<feature type="helix" evidence="9">
    <location>
        <begin position="28"/>
        <end position="30"/>
    </location>
</feature>
<feature type="strand" evidence="9">
    <location>
        <begin position="31"/>
        <end position="38"/>
    </location>
</feature>
<feature type="strand" evidence="10">
    <location>
        <begin position="48"/>
        <end position="50"/>
    </location>
</feature>
<feature type="strand" evidence="9">
    <location>
        <begin position="54"/>
        <end position="57"/>
    </location>
</feature>
<feature type="helix" evidence="9">
    <location>
        <begin position="58"/>
        <end position="60"/>
    </location>
</feature>
<feature type="helix" evidence="9">
    <location>
        <begin position="61"/>
        <end position="70"/>
    </location>
</feature>
<feature type="strand" evidence="9">
    <location>
        <begin position="75"/>
        <end position="81"/>
    </location>
</feature>
<feature type="strand" evidence="9">
    <location>
        <begin position="86"/>
        <end position="88"/>
    </location>
</feature>
<feature type="helix" evidence="9">
    <location>
        <begin position="90"/>
        <end position="93"/>
    </location>
</feature>
<feature type="helix" evidence="9">
    <location>
        <begin position="98"/>
        <end position="109"/>
    </location>
</feature>
<feature type="strand" evidence="9">
    <location>
        <begin position="113"/>
        <end position="119"/>
    </location>
</feature>
<feature type="turn" evidence="9">
    <location>
        <begin position="122"/>
        <end position="124"/>
    </location>
</feature>
<feature type="strand" evidence="9">
    <location>
        <begin position="125"/>
        <end position="127"/>
    </location>
</feature>
<feature type="strand" evidence="10">
    <location>
        <begin position="129"/>
        <end position="133"/>
    </location>
</feature>
<feature type="strand" evidence="9">
    <location>
        <begin position="135"/>
        <end position="138"/>
    </location>
</feature>
<feature type="helix" evidence="9">
    <location>
        <begin position="140"/>
        <end position="157"/>
    </location>
</feature>
<feature type="strand" evidence="9">
    <location>
        <begin position="160"/>
        <end position="164"/>
    </location>
</feature>
<feature type="helix" evidence="9">
    <location>
        <begin position="171"/>
        <end position="181"/>
    </location>
</feature>
<feature type="strand" evidence="9">
    <location>
        <begin position="188"/>
        <end position="190"/>
    </location>
</feature>
<feature type="strand" evidence="9">
    <location>
        <begin position="194"/>
        <end position="196"/>
    </location>
</feature>
<feature type="helix" evidence="8">
    <location>
        <begin position="199"/>
        <end position="201"/>
    </location>
</feature>
<feature type="helix" evidence="9">
    <location>
        <begin position="202"/>
        <end position="208"/>
    </location>
</feature>
<feature type="turn" evidence="9">
    <location>
        <begin position="217"/>
        <end position="219"/>
    </location>
</feature>
<feature type="helix" evidence="9">
    <location>
        <begin position="226"/>
        <end position="238"/>
    </location>
</feature>
<feature type="strand" evidence="9">
    <location>
        <begin position="242"/>
        <end position="248"/>
    </location>
</feature>
<feature type="helix" evidence="8">
    <location>
        <begin position="250"/>
        <end position="252"/>
    </location>
</feature>
<feature type="helix" evidence="9">
    <location>
        <begin position="253"/>
        <end position="260"/>
    </location>
</feature>
<feature type="strand" evidence="9">
    <location>
        <begin position="267"/>
        <end position="271"/>
    </location>
</feature>
<feature type="helix" evidence="9">
    <location>
        <begin position="273"/>
        <end position="284"/>
    </location>
</feature>
<feature type="helix" evidence="9">
    <location>
        <begin position="290"/>
        <end position="303"/>
    </location>
</feature>
<feature type="strand" evidence="9">
    <location>
        <begin position="307"/>
        <end position="311"/>
    </location>
</feature>
<feature type="helix" evidence="9">
    <location>
        <begin position="314"/>
        <end position="319"/>
    </location>
</feature>
<comment type="function">
    <text>Catalyzes an early step in the biosynthesis of tetrapyrroles. Binds two molecules of 5-aminolevulinate per subunit, each at a distinct site, and catalyzes their condensation to form porphobilinogen.</text>
</comment>
<comment type="catalytic activity">
    <reaction evidence="7">
        <text>2 5-aminolevulinate = porphobilinogen + 2 H2O + H(+)</text>
        <dbReference type="Rhea" id="RHEA:24064"/>
        <dbReference type="ChEBI" id="CHEBI:15377"/>
        <dbReference type="ChEBI" id="CHEBI:15378"/>
        <dbReference type="ChEBI" id="CHEBI:58126"/>
        <dbReference type="ChEBI" id="CHEBI:356416"/>
        <dbReference type="EC" id="4.2.1.24"/>
    </reaction>
</comment>
<comment type="cofactor">
    <cofactor evidence="1 2 3 4 5">
        <name>Zn(2+)</name>
        <dbReference type="ChEBI" id="CHEBI:29105"/>
    </cofactor>
    <text evidence="1 2 3 4">Binds 1 zinc ion per monomer.</text>
</comment>
<comment type="activity regulation">
    <text evidence="4">Allosteric enzyme. Stimulated by magnesium ions.</text>
</comment>
<comment type="biophysicochemical properties">
    <kinetics>
        <KM evidence="5">800 uM for 5-aminolevulinic acid</KM>
    </kinetics>
    <phDependence>
        <text evidence="5">Optimum pH is 8.5.</text>
    </phDependence>
</comment>
<comment type="pathway">
    <text>Porphyrin-containing compound metabolism; protoporphyrin-IX biosynthesis; coproporphyrinogen-III from 5-aminolevulinate: step 1/4.</text>
</comment>
<comment type="subunit">
    <text evidence="1 2 3 5">Homooctamer.</text>
</comment>
<comment type="similarity">
    <text evidence="6">Belongs to the ALAD family.</text>
</comment>
<comment type="sequence caution" evidence="6">
    <conflict type="erroneous initiation">
        <sequence resource="EMBL-CDS" id="AAB18092"/>
    </conflict>
    <text>Extended N-terminus.</text>
</comment>
<comment type="sequence caution" evidence="6">
    <conflict type="erroneous initiation">
        <sequence resource="EMBL-CDS" id="BAA12842"/>
    </conflict>
    <text>Extended N-terminus.</text>
</comment>